<accession>Q89AV4</accession>
<protein>
    <recommendedName>
        <fullName>Uncharacterized membrane protein bbp_130</fullName>
    </recommendedName>
</protein>
<comment type="subcellular location">
    <subcellularLocation>
        <location evidence="2">Cell membrane</location>
        <topology evidence="2">Multi-pass membrane protein</topology>
    </subcellularLocation>
</comment>
<comment type="similarity">
    <text evidence="2">Belongs to the DedA family.</text>
</comment>
<name>Y130_BUCBP</name>
<organism>
    <name type="scientific">Buchnera aphidicola subsp. Baizongia pistaciae (strain Bp)</name>
    <dbReference type="NCBI Taxonomy" id="224915"/>
    <lineage>
        <taxon>Bacteria</taxon>
        <taxon>Pseudomonadati</taxon>
        <taxon>Pseudomonadota</taxon>
        <taxon>Gammaproteobacteria</taxon>
        <taxon>Enterobacterales</taxon>
        <taxon>Erwiniaceae</taxon>
        <taxon>Buchnera</taxon>
    </lineage>
</organism>
<keyword id="KW-1003">Cell membrane</keyword>
<keyword id="KW-0472">Membrane</keyword>
<keyword id="KW-1185">Reference proteome</keyword>
<keyword id="KW-0812">Transmembrane</keyword>
<keyword id="KW-1133">Transmembrane helix</keyword>
<evidence type="ECO:0000255" key="1"/>
<evidence type="ECO:0000305" key="2"/>
<dbReference type="EMBL" id="AE016826">
    <property type="protein sequence ID" value="AAO26864.1"/>
    <property type="molecule type" value="Genomic_DNA"/>
</dbReference>
<dbReference type="RefSeq" id="WP_011091265.1">
    <property type="nucleotide sequence ID" value="NC_004545.1"/>
</dbReference>
<dbReference type="STRING" id="224915.bbp_130"/>
<dbReference type="KEGG" id="bab:bbp_130"/>
<dbReference type="eggNOG" id="COG0586">
    <property type="taxonomic scope" value="Bacteria"/>
</dbReference>
<dbReference type="HOGENOM" id="CLU_044208_3_2_6"/>
<dbReference type="OrthoDB" id="9780918at2"/>
<dbReference type="Proteomes" id="UP000000601">
    <property type="component" value="Chromosome"/>
</dbReference>
<dbReference type="GO" id="GO:0005886">
    <property type="term" value="C:plasma membrane"/>
    <property type="evidence" value="ECO:0007669"/>
    <property type="project" value="UniProtKB-SubCell"/>
</dbReference>
<dbReference type="InterPro" id="IPR032818">
    <property type="entry name" value="DedA-like"/>
</dbReference>
<dbReference type="InterPro" id="IPR032816">
    <property type="entry name" value="VTT_dom"/>
</dbReference>
<dbReference type="PANTHER" id="PTHR30353">
    <property type="entry name" value="INNER MEMBRANE PROTEIN DEDA-RELATED"/>
    <property type="match status" value="1"/>
</dbReference>
<dbReference type="PANTHER" id="PTHR30353:SF15">
    <property type="entry name" value="INNER MEMBRANE PROTEIN YABI"/>
    <property type="match status" value="1"/>
</dbReference>
<dbReference type="Pfam" id="PF09335">
    <property type="entry name" value="VTT_dom"/>
    <property type="match status" value="1"/>
</dbReference>
<sequence>METWFLYFITKSISYALFMVLIVTFLESLALVGLFLPGIVLMSILGTLIGNGTLSFYPAWIVGIIGCMCGDWISYYCGFKFKKCITNLHLLKNNNVVLDKITNTLTNYPITTILLGRFIGPTRPLVPMVCGMLNISLKTFIIPNILGCILWPPIYFLPGIFTGIAISNTTNYSENTYFKIQFLAAILLIWLGIFLLWKLWKRYTDTGKKKIYISNVNLCLLLTISLSAGITIMIYIQSNSTLIFFRKILWKILISSQ</sequence>
<gene>
    <name type="ordered locus">bbp_130</name>
</gene>
<feature type="chain" id="PRO_0000161426" description="Uncharacterized membrane protein bbp_130">
    <location>
        <begin position="1"/>
        <end position="257"/>
    </location>
</feature>
<feature type="transmembrane region" description="Helical" evidence="1">
    <location>
        <begin position="5"/>
        <end position="25"/>
    </location>
</feature>
<feature type="transmembrane region" description="Helical" evidence="1">
    <location>
        <begin position="29"/>
        <end position="49"/>
    </location>
</feature>
<feature type="transmembrane region" description="Helical" evidence="1">
    <location>
        <begin position="53"/>
        <end position="73"/>
    </location>
</feature>
<feature type="transmembrane region" description="Helical" evidence="1">
    <location>
        <begin position="146"/>
        <end position="166"/>
    </location>
</feature>
<feature type="transmembrane region" description="Helical" evidence="1">
    <location>
        <begin position="180"/>
        <end position="200"/>
    </location>
</feature>
<feature type="transmembrane region" description="Helical" evidence="1">
    <location>
        <begin position="216"/>
        <end position="236"/>
    </location>
</feature>
<reference key="1">
    <citation type="journal article" date="2003" name="Proc. Natl. Acad. Sci. U.S.A.">
        <title>Reductive genome evolution in Buchnera aphidicola.</title>
        <authorList>
            <person name="van Ham R.C.H.J."/>
            <person name="Kamerbeek J."/>
            <person name="Palacios C."/>
            <person name="Rausell C."/>
            <person name="Abascal F."/>
            <person name="Bastolla U."/>
            <person name="Fernandez J.M."/>
            <person name="Jimenez L."/>
            <person name="Postigo M."/>
            <person name="Silva F.J."/>
            <person name="Tamames J."/>
            <person name="Viguera E."/>
            <person name="Latorre A."/>
            <person name="Valencia A."/>
            <person name="Moran F."/>
            <person name="Moya A."/>
        </authorList>
    </citation>
    <scope>NUCLEOTIDE SEQUENCE [LARGE SCALE GENOMIC DNA]</scope>
    <source>
        <strain>Bp</strain>
    </source>
</reference>
<proteinExistence type="inferred from homology"/>